<organism>
    <name type="scientific">Mus musculus</name>
    <name type="common">Mouse</name>
    <dbReference type="NCBI Taxonomy" id="10090"/>
    <lineage>
        <taxon>Eukaryota</taxon>
        <taxon>Metazoa</taxon>
        <taxon>Chordata</taxon>
        <taxon>Craniata</taxon>
        <taxon>Vertebrata</taxon>
        <taxon>Euteleostomi</taxon>
        <taxon>Mammalia</taxon>
        <taxon>Eutheria</taxon>
        <taxon>Euarchontoglires</taxon>
        <taxon>Glires</taxon>
        <taxon>Rodentia</taxon>
        <taxon>Myomorpha</taxon>
        <taxon>Muroidea</taxon>
        <taxon>Muridae</taxon>
        <taxon>Murinae</taxon>
        <taxon>Mus</taxon>
        <taxon>Mus</taxon>
    </lineage>
</organism>
<accession>Q91WG3</accession>
<accession>Q8BTK3</accession>
<feature type="transit peptide" description="Mitochondrion" evidence="3">
    <location>
        <begin position="1"/>
        <end status="unknown"/>
    </location>
</feature>
<feature type="chain" id="PRO_0000252091" description="Pseudouridylate synthase TRUB2, mitochondrial">
    <location>
        <begin status="unknown"/>
        <end position="331"/>
    </location>
</feature>
<feature type="region of interest" description="Disordered" evidence="4">
    <location>
        <begin position="309"/>
        <end position="331"/>
    </location>
</feature>
<feature type="compositionally biased region" description="Polar residues" evidence="4">
    <location>
        <begin position="319"/>
        <end position="331"/>
    </location>
</feature>
<feature type="active site" description="Nucleophile" evidence="2">
    <location>
        <position position="98"/>
    </location>
</feature>
<feature type="sequence conflict" description="In Ref. 1; BAC41040." evidence="5" ref="1">
    <original>D</original>
    <variation>H</variation>
    <location>
        <position position="266"/>
    </location>
</feature>
<sequence length="331" mass="36807">MGSSGLARLQGLFAVYKPPGLKWLHLRETVELQLLKGLNAQQPPAPDQRVRFLLGPVEGSEEKKLTLRATNVPSLTTHRLVRGPAFTNLKIGVGHRLDVQASGVLVLAVGHGRSLLTDMYDAHLTKDYTVRGLLGKATDNFCEDGRLIEKTTYDHVTRERLDRILAVIQGSHQKALVMYSNLDLKSQEAYEMAVQGVIRPMNKSPMLISGIRCLHFAPPEFLLEVQCMHETQQQLRKLVHEIGLELKTSAVCTQVRRTRDGFFGLDDALLRTQWDLHNIQDAIQAAAPRVAAELQKNLSLKLGHHQLPSTGQPWGLKDPSSTLELESCSGQ</sequence>
<reference key="1">
    <citation type="journal article" date="2005" name="Science">
        <title>The transcriptional landscape of the mammalian genome.</title>
        <authorList>
            <person name="Carninci P."/>
            <person name="Kasukawa T."/>
            <person name="Katayama S."/>
            <person name="Gough J."/>
            <person name="Frith M.C."/>
            <person name="Maeda N."/>
            <person name="Oyama R."/>
            <person name="Ravasi T."/>
            <person name="Lenhard B."/>
            <person name="Wells C."/>
            <person name="Kodzius R."/>
            <person name="Shimokawa K."/>
            <person name="Bajic V.B."/>
            <person name="Brenner S.E."/>
            <person name="Batalov S."/>
            <person name="Forrest A.R."/>
            <person name="Zavolan M."/>
            <person name="Davis M.J."/>
            <person name="Wilming L.G."/>
            <person name="Aidinis V."/>
            <person name="Allen J.E."/>
            <person name="Ambesi-Impiombato A."/>
            <person name="Apweiler R."/>
            <person name="Aturaliya R.N."/>
            <person name="Bailey T.L."/>
            <person name="Bansal M."/>
            <person name="Baxter L."/>
            <person name="Beisel K.W."/>
            <person name="Bersano T."/>
            <person name="Bono H."/>
            <person name="Chalk A.M."/>
            <person name="Chiu K.P."/>
            <person name="Choudhary V."/>
            <person name="Christoffels A."/>
            <person name="Clutterbuck D.R."/>
            <person name="Crowe M.L."/>
            <person name="Dalla E."/>
            <person name="Dalrymple B.P."/>
            <person name="de Bono B."/>
            <person name="Della Gatta G."/>
            <person name="di Bernardo D."/>
            <person name="Down T."/>
            <person name="Engstrom P."/>
            <person name="Fagiolini M."/>
            <person name="Faulkner G."/>
            <person name="Fletcher C.F."/>
            <person name="Fukushima T."/>
            <person name="Furuno M."/>
            <person name="Futaki S."/>
            <person name="Gariboldi M."/>
            <person name="Georgii-Hemming P."/>
            <person name="Gingeras T.R."/>
            <person name="Gojobori T."/>
            <person name="Green R.E."/>
            <person name="Gustincich S."/>
            <person name="Harbers M."/>
            <person name="Hayashi Y."/>
            <person name="Hensch T.K."/>
            <person name="Hirokawa N."/>
            <person name="Hill D."/>
            <person name="Huminiecki L."/>
            <person name="Iacono M."/>
            <person name="Ikeo K."/>
            <person name="Iwama A."/>
            <person name="Ishikawa T."/>
            <person name="Jakt M."/>
            <person name="Kanapin A."/>
            <person name="Katoh M."/>
            <person name="Kawasawa Y."/>
            <person name="Kelso J."/>
            <person name="Kitamura H."/>
            <person name="Kitano H."/>
            <person name="Kollias G."/>
            <person name="Krishnan S.P."/>
            <person name="Kruger A."/>
            <person name="Kummerfeld S.K."/>
            <person name="Kurochkin I.V."/>
            <person name="Lareau L.F."/>
            <person name="Lazarevic D."/>
            <person name="Lipovich L."/>
            <person name="Liu J."/>
            <person name="Liuni S."/>
            <person name="McWilliam S."/>
            <person name="Madan Babu M."/>
            <person name="Madera M."/>
            <person name="Marchionni L."/>
            <person name="Matsuda H."/>
            <person name="Matsuzawa S."/>
            <person name="Miki H."/>
            <person name="Mignone F."/>
            <person name="Miyake S."/>
            <person name="Morris K."/>
            <person name="Mottagui-Tabar S."/>
            <person name="Mulder N."/>
            <person name="Nakano N."/>
            <person name="Nakauchi H."/>
            <person name="Ng P."/>
            <person name="Nilsson R."/>
            <person name="Nishiguchi S."/>
            <person name="Nishikawa S."/>
            <person name="Nori F."/>
            <person name="Ohara O."/>
            <person name="Okazaki Y."/>
            <person name="Orlando V."/>
            <person name="Pang K.C."/>
            <person name="Pavan W.J."/>
            <person name="Pavesi G."/>
            <person name="Pesole G."/>
            <person name="Petrovsky N."/>
            <person name="Piazza S."/>
            <person name="Reed J."/>
            <person name="Reid J.F."/>
            <person name="Ring B.Z."/>
            <person name="Ringwald M."/>
            <person name="Rost B."/>
            <person name="Ruan Y."/>
            <person name="Salzberg S.L."/>
            <person name="Sandelin A."/>
            <person name="Schneider C."/>
            <person name="Schoenbach C."/>
            <person name="Sekiguchi K."/>
            <person name="Semple C.A."/>
            <person name="Seno S."/>
            <person name="Sessa L."/>
            <person name="Sheng Y."/>
            <person name="Shibata Y."/>
            <person name="Shimada H."/>
            <person name="Shimada K."/>
            <person name="Silva D."/>
            <person name="Sinclair B."/>
            <person name="Sperling S."/>
            <person name="Stupka E."/>
            <person name="Sugiura K."/>
            <person name="Sultana R."/>
            <person name="Takenaka Y."/>
            <person name="Taki K."/>
            <person name="Tammoja K."/>
            <person name="Tan S.L."/>
            <person name="Tang S."/>
            <person name="Taylor M.S."/>
            <person name="Tegner J."/>
            <person name="Teichmann S.A."/>
            <person name="Ueda H.R."/>
            <person name="van Nimwegen E."/>
            <person name="Verardo R."/>
            <person name="Wei C.L."/>
            <person name="Yagi K."/>
            <person name="Yamanishi H."/>
            <person name="Zabarovsky E."/>
            <person name="Zhu S."/>
            <person name="Zimmer A."/>
            <person name="Hide W."/>
            <person name="Bult C."/>
            <person name="Grimmond S.M."/>
            <person name="Teasdale R.D."/>
            <person name="Liu E.T."/>
            <person name="Brusic V."/>
            <person name="Quackenbush J."/>
            <person name="Wahlestedt C."/>
            <person name="Mattick J.S."/>
            <person name="Hume D.A."/>
            <person name="Kai C."/>
            <person name="Sasaki D."/>
            <person name="Tomaru Y."/>
            <person name="Fukuda S."/>
            <person name="Kanamori-Katayama M."/>
            <person name="Suzuki M."/>
            <person name="Aoki J."/>
            <person name="Arakawa T."/>
            <person name="Iida J."/>
            <person name="Imamura K."/>
            <person name="Itoh M."/>
            <person name="Kato T."/>
            <person name="Kawaji H."/>
            <person name="Kawagashira N."/>
            <person name="Kawashima T."/>
            <person name="Kojima M."/>
            <person name="Kondo S."/>
            <person name="Konno H."/>
            <person name="Nakano K."/>
            <person name="Ninomiya N."/>
            <person name="Nishio T."/>
            <person name="Okada M."/>
            <person name="Plessy C."/>
            <person name="Shibata K."/>
            <person name="Shiraki T."/>
            <person name="Suzuki S."/>
            <person name="Tagami M."/>
            <person name="Waki K."/>
            <person name="Watahiki A."/>
            <person name="Okamura-Oho Y."/>
            <person name="Suzuki H."/>
            <person name="Kawai J."/>
            <person name="Hayashizaki Y."/>
        </authorList>
    </citation>
    <scope>NUCLEOTIDE SEQUENCE [LARGE SCALE MRNA]</scope>
    <source>
        <strain>C57BL/6J</strain>
        <tissue>Amnion</tissue>
    </source>
</reference>
<reference key="2">
    <citation type="journal article" date="2004" name="Genome Res.">
        <title>The status, quality, and expansion of the NIH full-length cDNA project: the Mammalian Gene Collection (MGC).</title>
        <authorList>
            <consortium name="The MGC Project Team"/>
        </authorList>
    </citation>
    <scope>NUCLEOTIDE SEQUENCE [LARGE SCALE MRNA]</scope>
    <source>
        <strain>FVB/N</strain>
        <tissue>Kidney</tissue>
        <tissue>Liver</tissue>
    </source>
</reference>
<proteinExistence type="evidence at transcript level"/>
<protein>
    <recommendedName>
        <fullName evidence="5">Pseudouridylate synthase TRUB2, mitochondrial</fullName>
        <ecNumber evidence="1">5.4.99.-</ecNumber>
    </recommendedName>
    <alternativeName>
        <fullName evidence="1">TruB pseudouridine synthase homolog 2</fullName>
    </alternativeName>
    <alternativeName>
        <fullName evidence="5">tRNA pseudouridine 55 synthase TRUB2</fullName>
        <shortName evidence="5">Psi55 synthase TRUB2</shortName>
        <ecNumber evidence="1">5.4.99.25</ecNumber>
    </alternativeName>
</protein>
<dbReference type="EC" id="5.4.99.-" evidence="1"/>
<dbReference type="EC" id="5.4.99.25" evidence="1"/>
<dbReference type="EMBL" id="AK090004">
    <property type="protein sequence ID" value="BAC41040.1"/>
    <property type="molecule type" value="mRNA"/>
</dbReference>
<dbReference type="EMBL" id="AK167294">
    <property type="protein sequence ID" value="BAE39399.1"/>
    <property type="molecule type" value="mRNA"/>
</dbReference>
<dbReference type="EMBL" id="BC015285">
    <property type="protein sequence ID" value="AAH15285.1"/>
    <property type="molecule type" value="mRNA"/>
</dbReference>
<dbReference type="EMBL" id="BC024075">
    <property type="protein sequence ID" value="AAH24075.1"/>
    <property type="molecule type" value="mRNA"/>
</dbReference>
<dbReference type="CCDS" id="CCDS15856.1"/>
<dbReference type="RefSeq" id="NP_001277425.1">
    <property type="nucleotide sequence ID" value="NM_001290496.1"/>
</dbReference>
<dbReference type="RefSeq" id="NP_663495.3">
    <property type="nucleotide sequence ID" value="NM_145520.5"/>
</dbReference>
<dbReference type="SMR" id="Q91WG3"/>
<dbReference type="FunCoup" id="Q91WG3">
    <property type="interactions" value="1475"/>
</dbReference>
<dbReference type="STRING" id="10090.ENSMUSP00000041848"/>
<dbReference type="PhosphoSitePlus" id="Q91WG3"/>
<dbReference type="PaxDb" id="10090-ENSMUSP00000041848"/>
<dbReference type="PeptideAtlas" id="Q91WG3"/>
<dbReference type="ProteomicsDB" id="258990"/>
<dbReference type="Pumba" id="Q91WG3"/>
<dbReference type="Antibodypedia" id="17439">
    <property type="antibodies" value="150 antibodies from 23 providers"/>
</dbReference>
<dbReference type="DNASU" id="227682"/>
<dbReference type="Ensembl" id="ENSMUST00000048044.12">
    <property type="protein sequence ID" value="ENSMUSP00000041848.6"/>
    <property type="gene ID" value="ENSMUSG00000039826.14"/>
</dbReference>
<dbReference type="GeneID" id="227682"/>
<dbReference type="KEGG" id="mmu:227682"/>
<dbReference type="UCSC" id="uc008jaa.3">
    <property type="organism name" value="mouse"/>
</dbReference>
<dbReference type="AGR" id="MGI:2442186"/>
<dbReference type="CTD" id="26995"/>
<dbReference type="MGI" id="MGI:2442186">
    <property type="gene designation" value="Trub2"/>
</dbReference>
<dbReference type="VEuPathDB" id="HostDB:ENSMUSG00000039826"/>
<dbReference type="eggNOG" id="KOG2559">
    <property type="taxonomic scope" value="Eukaryota"/>
</dbReference>
<dbReference type="GeneTree" id="ENSGT00940000156773"/>
<dbReference type="HOGENOM" id="CLU_032087_1_1_1"/>
<dbReference type="InParanoid" id="Q91WG3"/>
<dbReference type="OMA" id="YHVTARM"/>
<dbReference type="OrthoDB" id="9995526at2759"/>
<dbReference type="PhylomeDB" id="Q91WG3"/>
<dbReference type="TreeFam" id="TF320759"/>
<dbReference type="BioGRID-ORCS" id="227682">
    <property type="hits" value="19 hits in 78 CRISPR screens"/>
</dbReference>
<dbReference type="ChiTaRS" id="Trub2">
    <property type="organism name" value="mouse"/>
</dbReference>
<dbReference type="PRO" id="PR:Q91WG3"/>
<dbReference type="Proteomes" id="UP000000589">
    <property type="component" value="Chromosome 2"/>
</dbReference>
<dbReference type="RNAct" id="Q91WG3">
    <property type="molecule type" value="protein"/>
</dbReference>
<dbReference type="Bgee" id="ENSMUSG00000039826">
    <property type="expression patterns" value="Expressed in metanephric renal vesicle and 253 other cell types or tissues"/>
</dbReference>
<dbReference type="ExpressionAtlas" id="Q91WG3">
    <property type="expression patterns" value="baseline and differential"/>
</dbReference>
<dbReference type="GO" id="GO:0005759">
    <property type="term" value="C:mitochondrial matrix"/>
    <property type="evidence" value="ECO:0007669"/>
    <property type="project" value="UniProtKB-SubCell"/>
</dbReference>
<dbReference type="GO" id="GO:0035770">
    <property type="term" value="C:ribonucleoprotein granule"/>
    <property type="evidence" value="ECO:0007669"/>
    <property type="project" value="Ensembl"/>
</dbReference>
<dbReference type="GO" id="GO:0009982">
    <property type="term" value="F:pseudouridine synthase activity"/>
    <property type="evidence" value="ECO:0000250"/>
    <property type="project" value="UniProtKB"/>
</dbReference>
<dbReference type="GO" id="GO:0003723">
    <property type="term" value="F:RNA binding"/>
    <property type="evidence" value="ECO:0007669"/>
    <property type="project" value="InterPro"/>
</dbReference>
<dbReference type="GO" id="GO:0160148">
    <property type="term" value="F:tRNA pseudouridine(55) synthase activity"/>
    <property type="evidence" value="ECO:0007669"/>
    <property type="project" value="RHEA"/>
</dbReference>
<dbReference type="GO" id="GO:0006397">
    <property type="term" value="P:mRNA processing"/>
    <property type="evidence" value="ECO:0007669"/>
    <property type="project" value="UniProtKB-KW"/>
</dbReference>
<dbReference type="GO" id="GO:1990481">
    <property type="term" value="P:mRNA pseudouridine synthesis"/>
    <property type="evidence" value="ECO:0007669"/>
    <property type="project" value="Ensembl"/>
</dbReference>
<dbReference type="GO" id="GO:0070131">
    <property type="term" value="P:positive regulation of mitochondrial translation"/>
    <property type="evidence" value="ECO:0000250"/>
    <property type="project" value="UniProtKB"/>
</dbReference>
<dbReference type="GO" id="GO:0008033">
    <property type="term" value="P:tRNA processing"/>
    <property type="evidence" value="ECO:0007669"/>
    <property type="project" value="UniProtKB-KW"/>
</dbReference>
<dbReference type="CDD" id="cd02868">
    <property type="entry name" value="PseudoU_synth_hTruB2_like"/>
    <property type="match status" value="1"/>
</dbReference>
<dbReference type="Gene3D" id="3.30.2350.10">
    <property type="entry name" value="Pseudouridine synthase"/>
    <property type="match status" value="1"/>
</dbReference>
<dbReference type="InterPro" id="IPR020103">
    <property type="entry name" value="PsdUridine_synth_cat_dom_sf"/>
</dbReference>
<dbReference type="InterPro" id="IPR002501">
    <property type="entry name" value="PsdUridine_synth_N"/>
</dbReference>
<dbReference type="InterPro" id="IPR039048">
    <property type="entry name" value="Trub2"/>
</dbReference>
<dbReference type="PANTHER" id="PTHR13195">
    <property type="entry name" value="PSEUDOURIDINE SYNTHASE-RELATED"/>
    <property type="match status" value="1"/>
</dbReference>
<dbReference type="PANTHER" id="PTHR13195:SF0">
    <property type="entry name" value="PSEUDOURIDYLATE SYNTHASE TRUB2, MITOCHONDRIAL"/>
    <property type="match status" value="1"/>
</dbReference>
<dbReference type="Pfam" id="PF01509">
    <property type="entry name" value="TruB_N"/>
    <property type="match status" value="1"/>
</dbReference>
<dbReference type="SUPFAM" id="SSF55120">
    <property type="entry name" value="Pseudouridine synthase"/>
    <property type="match status" value="1"/>
</dbReference>
<evidence type="ECO:0000250" key="1">
    <source>
        <dbReference type="UniProtKB" id="O95900"/>
    </source>
</evidence>
<evidence type="ECO:0000250" key="2">
    <source>
        <dbReference type="UniProtKB" id="Q9Y606"/>
    </source>
</evidence>
<evidence type="ECO:0000255" key="3"/>
<evidence type="ECO:0000256" key="4">
    <source>
        <dbReference type="SAM" id="MobiDB-lite"/>
    </source>
</evidence>
<evidence type="ECO:0000305" key="5"/>
<evidence type="ECO:0000312" key="6">
    <source>
        <dbReference type="MGI" id="MGI:2442186"/>
    </source>
</evidence>
<gene>
    <name evidence="6" type="primary">Trub2</name>
</gene>
<comment type="function">
    <text evidence="1">Minor enzyme contributing to the isomerization of uridine to pseudouridine (pseudouridylation) of specific mitochondrial mRNAs (mt-mRNAs) such as COXI and COXIII mt-mRNAs. As a component of a functional protein-RNA module, consisting of RCC1L, NGRN, RPUSD3, RPUSD4, TRUB2, FASTKD2 and 16S mitochondrial ribosomal RNA (16S mt-rRNA), controls 16S mt-rRNA abundance and is required for intra-mitochondrial translation. Also catalyzes pseudouridylation of some tRNAs, including synthesis of pseudouridine(55) from uracil-55, in the psi GC loop of a subset of tRNAs.</text>
</comment>
<comment type="catalytic activity">
    <reaction evidence="1">
        <text>a uridine in mRNA = a pseudouridine in mRNA</text>
        <dbReference type="Rhea" id="RHEA:56644"/>
        <dbReference type="Rhea" id="RHEA-COMP:14658"/>
        <dbReference type="Rhea" id="RHEA-COMP:14659"/>
        <dbReference type="ChEBI" id="CHEBI:65314"/>
        <dbReference type="ChEBI" id="CHEBI:65315"/>
    </reaction>
</comment>
<comment type="catalytic activity">
    <reaction evidence="1">
        <text>uridine(55) in tRNA = pseudouridine(55) in tRNA</text>
        <dbReference type="Rhea" id="RHEA:42532"/>
        <dbReference type="Rhea" id="RHEA-COMP:10101"/>
        <dbReference type="Rhea" id="RHEA-COMP:10102"/>
        <dbReference type="ChEBI" id="CHEBI:65314"/>
        <dbReference type="ChEBI" id="CHEBI:65315"/>
        <dbReference type="EC" id="5.4.99.25"/>
    </reaction>
    <physiologicalReaction direction="left-to-right" evidence="1">
        <dbReference type="Rhea" id="RHEA:42533"/>
    </physiologicalReaction>
</comment>
<comment type="subunit">
    <text evidence="1">Forms a regulatory protein-RNA complex, consisting of RCC1L, NGRN, RPUSD3, RPUSD4, TRUB2, FASTKD2 and 16S mt-rRNA.</text>
</comment>
<comment type="subcellular location">
    <subcellularLocation>
        <location evidence="1">Mitochondrion matrix</location>
    </subcellularLocation>
    <text evidence="1">Localizes to mitochondrial RNA granules, platforms for post-transcriptional RNA modification and ribosome assembly.</text>
</comment>
<comment type="similarity">
    <text evidence="5">Belongs to the pseudouridine synthase TruB family.</text>
</comment>
<name>TRUB2_MOUSE</name>
<keyword id="KW-0413">Isomerase</keyword>
<keyword id="KW-0496">Mitochondrion</keyword>
<keyword id="KW-0507">mRNA processing</keyword>
<keyword id="KW-1185">Reference proteome</keyword>
<keyword id="KW-0809">Transit peptide</keyword>
<keyword id="KW-0819">tRNA processing</keyword>